<organism>
    <name type="scientific">Actinobacillus succinogenes (strain ATCC 55618 / DSM 22257 / CCUG 43843 / 130Z)</name>
    <dbReference type="NCBI Taxonomy" id="339671"/>
    <lineage>
        <taxon>Bacteria</taxon>
        <taxon>Pseudomonadati</taxon>
        <taxon>Pseudomonadota</taxon>
        <taxon>Gammaproteobacteria</taxon>
        <taxon>Pasteurellales</taxon>
        <taxon>Pasteurellaceae</taxon>
        <taxon>Actinobacillus</taxon>
    </lineage>
</organism>
<accession>A6VKJ6</accession>
<reference key="1">
    <citation type="journal article" date="2010" name="BMC Genomics">
        <title>A genomic perspective on the potential of Actinobacillus succinogenes for industrial succinate production.</title>
        <authorList>
            <person name="McKinlay J.B."/>
            <person name="Laivenieks M."/>
            <person name="Schindler B.D."/>
            <person name="McKinlay A.A."/>
            <person name="Siddaramappa S."/>
            <person name="Challacombe J.F."/>
            <person name="Lowry S.R."/>
            <person name="Clum A."/>
            <person name="Lapidus A.L."/>
            <person name="Burkhart K.B."/>
            <person name="Harkins V."/>
            <person name="Vieille C."/>
        </authorList>
    </citation>
    <scope>NUCLEOTIDE SEQUENCE [LARGE SCALE GENOMIC DNA]</scope>
    <source>
        <strain>ATCC 55618 / DSM 22257 / CCUG 43843 / 130Z</strain>
    </source>
</reference>
<comment type="function">
    <text evidence="1">Attaches a formyl group to the free amino group of methionyl-tRNA(fMet). The formyl group appears to play a dual role in the initiator identity of N-formylmethionyl-tRNA by promoting its recognition by IF2 and preventing the misappropriation of this tRNA by the elongation apparatus.</text>
</comment>
<comment type="catalytic activity">
    <reaction evidence="1">
        <text>L-methionyl-tRNA(fMet) + (6R)-10-formyltetrahydrofolate = N-formyl-L-methionyl-tRNA(fMet) + (6S)-5,6,7,8-tetrahydrofolate + H(+)</text>
        <dbReference type="Rhea" id="RHEA:24380"/>
        <dbReference type="Rhea" id="RHEA-COMP:9952"/>
        <dbReference type="Rhea" id="RHEA-COMP:9953"/>
        <dbReference type="ChEBI" id="CHEBI:15378"/>
        <dbReference type="ChEBI" id="CHEBI:57453"/>
        <dbReference type="ChEBI" id="CHEBI:78530"/>
        <dbReference type="ChEBI" id="CHEBI:78844"/>
        <dbReference type="ChEBI" id="CHEBI:195366"/>
        <dbReference type="EC" id="2.1.2.9"/>
    </reaction>
</comment>
<comment type="similarity">
    <text evidence="1">Belongs to the Fmt family.</text>
</comment>
<gene>
    <name evidence="1" type="primary">fmt</name>
    <name type="ordered locus">Asuc_0113</name>
</gene>
<sequence>MKNLNIIFAGTPDFAAQHLQALLASNHNVIAVYTQPDKPAGRGKKLQASPVKQLAQQHNLPVYQPKSLRNEEAQSELAALNADVMVVVAYGLILPKAVLEAPRLGCLNVHGSILPRWRGAAPIQRAIWAGDKQTGVTVMQMNEGLDTGDMLHKVYCEITPQETSATLYQKLAQLAPSALIEVLDHLEDGSFQPQVQDDSQSCYADKLTKEEAKLDWTLPAAQLERNIRAFNPAPTAFLTLNLNGNEERIKIYQADVLPHQEKAAGTVLACDKKGVQIATADGVLNITRLQPSGKKPMSVQDFLNGRADWFQAGNVLS</sequence>
<feature type="chain" id="PRO_1000071656" description="Methionyl-tRNA formyltransferase">
    <location>
        <begin position="1"/>
        <end position="317"/>
    </location>
</feature>
<feature type="binding site" evidence="1">
    <location>
        <begin position="112"/>
        <end position="115"/>
    </location>
    <ligand>
        <name>(6S)-5,6,7,8-tetrahydrofolate</name>
        <dbReference type="ChEBI" id="CHEBI:57453"/>
    </ligand>
</feature>
<keyword id="KW-0648">Protein biosynthesis</keyword>
<keyword id="KW-1185">Reference proteome</keyword>
<keyword id="KW-0808">Transferase</keyword>
<proteinExistence type="inferred from homology"/>
<name>FMT_ACTSZ</name>
<protein>
    <recommendedName>
        <fullName evidence="1">Methionyl-tRNA formyltransferase</fullName>
        <ecNumber evidence="1">2.1.2.9</ecNumber>
    </recommendedName>
</protein>
<evidence type="ECO:0000255" key="1">
    <source>
        <dbReference type="HAMAP-Rule" id="MF_00182"/>
    </source>
</evidence>
<dbReference type="EC" id="2.1.2.9" evidence="1"/>
<dbReference type="EMBL" id="CP000746">
    <property type="protein sequence ID" value="ABR73493.1"/>
    <property type="molecule type" value="Genomic_DNA"/>
</dbReference>
<dbReference type="RefSeq" id="WP_011978769.1">
    <property type="nucleotide sequence ID" value="NC_009655.1"/>
</dbReference>
<dbReference type="SMR" id="A6VKJ6"/>
<dbReference type="STRING" id="339671.Asuc_0113"/>
<dbReference type="KEGG" id="asu:Asuc_0113"/>
<dbReference type="eggNOG" id="COG0223">
    <property type="taxonomic scope" value="Bacteria"/>
</dbReference>
<dbReference type="HOGENOM" id="CLU_033347_1_2_6"/>
<dbReference type="OrthoDB" id="9802815at2"/>
<dbReference type="Proteomes" id="UP000001114">
    <property type="component" value="Chromosome"/>
</dbReference>
<dbReference type="GO" id="GO:0005829">
    <property type="term" value="C:cytosol"/>
    <property type="evidence" value="ECO:0007669"/>
    <property type="project" value="TreeGrafter"/>
</dbReference>
<dbReference type="GO" id="GO:0004479">
    <property type="term" value="F:methionyl-tRNA formyltransferase activity"/>
    <property type="evidence" value="ECO:0007669"/>
    <property type="project" value="UniProtKB-UniRule"/>
</dbReference>
<dbReference type="CDD" id="cd08646">
    <property type="entry name" value="FMT_core_Met-tRNA-FMT_N"/>
    <property type="match status" value="1"/>
</dbReference>
<dbReference type="CDD" id="cd08704">
    <property type="entry name" value="Met_tRNA_FMT_C"/>
    <property type="match status" value="1"/>
</dbReference>
<dbReference type="FunFam" id="3.40.50.170:FF:000003">
    <property type="entry name" value="Methionyl-tRNA formyltransferase"/>
    <property type="match status" value="1"/>
</dbReference>
<dbReference type="Gene3D" id="3.10.25.10">
    <property type="entry name" value="Formyl transferase, C-terminal domain"/>
    <property type="match status" value="1"/>
</dbReference>
<dbReference type="Gene3D" id="3.40.50.170">
    <property type="entry name" value="Formyl transferase, N-terminal domain"/>
    <property type="match status" value="1"/>
</dbReference>
<dbReference type="HAMAP" id="MF_00182">
    <property type="entry name" value="Formyl_trans"/>
    <property type="match status" value="1"/>
</dbReference>
<dbReference type="InterPro" id="IPR005794">
    <property type="entry name" value="Fmt"/>
</dbReference>
<dbReference type="InterPro" id="IPR005793">
    <property type="entry name" value="Formyl_trans_C"/>
</dbReference>
<dbReference type="InterPro" id="IPR037022">
    <property type="entry name" value="Formyl_trans_C_sf"/>
</dbReference>
<dbReference type="InterPro" id="IPR002376">
    <property type="entry name" value="Formyl_transf_N"/>
</dbReference>
<dbReference type="InterPro" id="IPR036477">
    <property type="entry name" value="Formyl_transf_N_sf"/>
</dbReference>
<dbReference type="InterPro" id="IPR011034">
    <property type="entry name" value="Formyl_transferase-like_C_sf"/>
</dbReference>
<dbReference type="InterPro" id="IPR001555">
    <property type="entry name" value="GART_AS"/>
</dbReference>
<dbReference type="InterPro" id="IPR044135">
    <property type="entry name" value="Met-tRNA-FMT_C"/>
</dbReference>
<dbReference type="InterPro" id="IPR041711">
    <property type="entry name" value="Met-tRNA-FMT_N"/>
</dbReference>
<dbReference type="NCBIfam" id="TIGR00460">
    <property type="entry name" value="fmt"/>
    <property type="match status" value="1"/>
</dbReference>
<dbReference type="PANTHER" id="PTHR11138">
    <property type="entry name" value="METHIONYL-TRNA FORMYLTRANSFERASE"/>
    <property type="match status" value="1"/>
</dbReference>
<dbReference type="PANTHER" id="PTHR11138:SF5">
    <property type="entry name" value="METHIONYL-TRNA FORMYLTRANSFERASE, MITOCHONDRIAL"/>
    <property type="match status" value="1"/>
</dbReference>
<dbReference type="Pfam" id="PF02911">
    <property type="entry name" value="Formyl_trans_C"/>
    <property type="match status" value="1"/>
</dbReference>
<dbReference type="Pfam" id="PF00551">
    <property type="entry name" value="Formyl_trans_N"/>
    <property type="match status" value="1"/>
</dbReference>
<dbReference type="SUPFAM" id="SSF50486">
    <property type="entry name" value="FMT C-terminal domain-like"/>
    <property type="match status" value="1"/>
</dbReference>
<dbReference type="SUPFAM" id="SSF53328">
    <property type="entry name" value="Formyltransferase"/>
    <property type="match status" value="1"/>
</dbReference>
<dbReference type="PROSITE" id="PS00373">
    <property type="entry name" value="GART"/>
    <property type="match status" value="1"/>
</dbReference>